<comment type="similarity">
    <text evidence="1">To phage P2 protein L.</text>
</comment>
<proteinExistence type="predicted"/>
<sequence>MFNGRTQDYDDTVITNNGFWSDIYVEEFQKQRAIPLQIPVEMVKAALVAAIQGVDLDLADVAESYRKSAVNSVTEISSPLINDENYAETLYKKAVFARAKAELLPEFNTLSGREIHQNRDYVTEQKSLLAEATHAIRTLKGKKRGSVWLL</sequence>
<feature type="chain" id="PRO_0000165309" description="Probable head completion/stabilization protein">
    <location>
        <begin position="1"/>
        <end position="150"/>
    </location>
</feature>
<evidence type="ECO:0000305" key="1"/>
<protein>
    <recommendedName>
        <fullName>Probable head completion/stabilization protein</fullName>
    </recommendedName>
    <alternativeName>
        <fullName>ORF20</fullName>
    </alternativeName>
</protein>
<reference key="1">
    <citation type="journal article" date="1996" name="Nucleic Acids Res.">
        <title>The complete nucleotide sequence of bacteriophage HP1 DNA.</title>
        <authorList>
            <person name="Esposito D."/>
            <person name="Fitzmaurice W.P."/>
            <person name="Benjamin R.C."/>
            <person name="Goodman S.D."/>
            <person name="Waldman A.S."/>
            <person name="Scocca J.J."/>
        </authorList>
    </citation>
    <scope>NUCLEOTIDE SEQUENCE [LARGE SCALE GENOMIC DNA]</scope>
</reference>
<keyword id="KW-1185">Reference proteome</keyword>
<dbReference type="EMBL" id="U24159">
    <property type="protein sequence ID" value="AAB09205.1"/>
    <property type="molecule type" value="Genomic_DNA"/>
</dbReference>
<dbReference type="PIR" id="S69526">
    <property type="entry name" value="S69526"/>
</dbReference>
<dbReference type="RefSeq" id="NP_043489.1">
    <property type="nucleotide sequence ID" value="NC_001697.1"/>
</dbReference>
<dbReference type="GeneID" id="1261139"/>
<dbReference type="KEGG" id="vg:1261139"/>
<dbReference type="Proteomes" id="UP000001713">
    <property type="component" value="Segment"/>
</dbReference>
<dbReference type="GO" id="GO:0019069">
    <property type="term" value="P:viral capsid assembly"/>
    <property type="evidence" value="ECO:0007669"/>
    <property type="project" value="InterPro"/>
</dbReference>
<dbReference type="InterPro" id="IPR009225">
    <property type="entry name" value="Phage_head_completion_GpL"/>
</dbReference>
<dbReference type="Pfam" id="PF05926">
    <property type="entry name" value="Phage_GPL"/>
    <property type="match status" value="1"/>
</dbReference>
<name>VPL_BPHC1</name>
<organism>
    <name type="scientific">Haemophilus phage HP1 (strain HP1c1)</name>
    <name type="common">Bacteriophage HP1</name>
    <dbReference type="NCBI Taxonomy" id="1289570"/>
    <lineage>
        <taxon>Viruses</taxon>
        <taxon>Duplodnaviria</taxon>
        <taxon>Heunggongvirae</taxon>
        <taxon>Uroviricota</taxon>
        <taxon>Caudoviricetes</taxon>
        <taxon>Peduoviridae</taxon>
        <taxon>Hpunavirus</taxon>
        <taxon>Haemophilus phage HP1</taxon>
    </lineage>
</organism>
<accession>P51722</accession>
<organismHost>
    <name type="scientific">Haemophilus influenzae</name>
    <dbReference type="NCBI Taxonomy" id="727"/>
</organismHost>